<name>YIAN_ECOLI</name>
<dbReference type="EMBL" id="U00039">
    <property type="protein sequence ID" value="AAB18555.1"/>
    <property type="status" value="ALT_FRAME"/>
    <property type="molecule type" value="Genomic_DNA"/>
</dbReference>
<dbReference type="EMBL" id="U00096">
    <property type="protein sequence ID" value="AAT48194.1"/>
    <property type="molecule type" value="Genomic_DNA"/>
</dbReference>
<dbReference type="EMBL" id="AP009048">
    <property type="protein sequence ID" value="BAE77715.1"/>
    <property type="molecule type" value="Genomic_DNA"/>
</dbReference>
<dbReference type="PIR" id="S47799">
    <property type="entry name" value="S47799"/>
</dbReference>
<dbReference type="RefSeq" id="WP_000279599.1">
    <property type="nucleotide sequence ID" value="NZ_SSZK01000041.1"/>
</dbReference>
<dbReference type="RefSeq" id="YP_026232.1">
    <property type="nucleotide sequence ID" value="NC_000913.3"/>
</dbReference>
<dbReference type="SMR" id="P37675"/>
<dbReference type="BioGRID" id="4262549">
    <property type="interactions" value="11"/>
</dbReference>
<dbReference type="ComplexPortal" id="CPX-4681">
    <property type="entry name" value="YiaMNO tripartite ATP-independent periplasmic transporter complex"/>
</dbReference>
<dbReference type="FunCoup" id="P37675">
    <property type="interactions" value="340"/>
</dbReference>
<dbReference type="STRING" id="511145.b3578"/>
<dbReference type="TCDB" id="2.A.56.1.2">
    <property type="family name" value="the tripartite atp-independent periplasmic transporter (trap-t) family"/>
</dbReference>
<dbReference type="PaxDb" id="511145-b3578"/>
<dbReference type="EnsemblBacteria" id="AAT48194">
    <property type="protein sequence ID" value="AAT48194"/>
    <property type="gene ID" value="b3578"/>
</dbReference>
<dbReference type="GeneID" id="75204654"/>
<dbReference type="GeneID" id="948092"/>
<dbReference type="KEGG" id="ecj:JW5651"/>
<dbReference type="KEGG" id="eco:b3578"/>
<dbReference type="KEGG" id="ecoc:C3026_19400"/>
<dbReference type="PATRIC" id="fig|1411691.4.peg.3134"/>
<dbReference type="EchoBASE" id="EB2190"/>
<dbReference type="eggNOG" id="COG1593">
    <property type="taxonomic scope" value="Bacteria"/>
</dbReference>
<dbReference type="HOGENOM" id="CLU_019824_4_1_6"/>
<dbReference type="InParanoid" id="P37675"/>
<dbReference type="OMA" id="RMTAFVG"/>
<dbReference type="OrthoDB" id="8627919at2"/>
<dbReference type="PhylomeDB" id="P37675"/>
<dbReference type="BioCyc" id="EcoCyc:EG12282-MONOMER"/>
<dbReference type="BioCyc" id="MetaCyc:EG12282-MONOMER"/>
<dbReference type="PRO" id="PR:P37675"/>
<dbReference type="Proteomes" id="UP000000625">
    <property type="component" value="Chromosome"/>
</dbReference>
<dbReference type="GO" id="GO:0016020">
    <property type="term" value="C:membrane"/>
    <property type="evidence" value="ECO:0000303"/>
    <property type="project" value="ComplexPortal"/>
</dbReference>
<dbReference type="GO" id="GO:0005886">
    <property type="term" value="C:plasma membrane"/>
    <property type="evidence" value="ECO:0000314"/>
    <property type="project" value="EcoCyc"/>
</dbReference>
<dbReference type="GO" id="GO:0031317">
    <property type="term" value="C:tripartite ATP-independent periplasmic transporter complex"/>
    <property type="evidence" value="ECO:0000303"/>
    <property type="project" value="ComplexPortal"/>
</dbReference>
<dbReference type="GO" id="GO:0015144">
    <property type="term" value="F:carbohydrate transmembrane transporter activity"/>
    <property type="evidence" value="ECO:0000314"/>
    <property type="project" value="EcoCyc"/>
</dbReference>
<dbReference type="GO" id="GO:0034219">
    <property type="term" value="P:carbohydrate transmembrane transport"/>
    <property type="evidence" value="ECO:0000314"/>
    <property type="project" value="EcoCyc"/>
</dbReference>
<dbReference type="GO" id="GO:1902075">
    <property type="term" value="P:cellular response to salt"/>
    <property type="evidence" value="ECO:0000303"/>
    <property type="project" value="ComplexPortal"/>
</dbReference>
<dbReference type="GO" id="GO:1900190">
    <property type="term" value="P:regulation of single-species biofilm formation"/>
    <property type="evidence" value="ECO:0000303"/>
    <property type="project" value="ComplexPortal"/>
</dbReference>
<dbReference type="InterPro" id="IPR010656">
    <property type="entry name" value="DctM"/>
</dbReference>
<dbReference type="InterPro" id="IPR004681">
    <property type="entry name" value="TRAP_DctM"/>
</dbReference>
<dbReference type="NCBIfam" id="TIGR00786">
    <property type="entry name" value="dctM"/>
    <property type="match status" value="1"/>
</dbReference>
<dbReference type="NCBIfam" id="NF011634">
    <property type="entry name" value="PRK15060.1"/>
    <property type="match status" value="1"/>
</dbReference>
<dbReference type="PANTHER" id="PTHR33362:SF4">
    <property type="entry name" value="2,3-DIKETO-L-GULONATE TRAP TRANSPORTER LARGE PERMEASE PROTEIN YIAN"/>
    <property type="match status" value="1"/>
</dbReference>
<dbReference type="PANTHER" id="PTHR33362">
    <property type="entry name" value="SIALIC ACID TRAP TRANSPORTER PERMEASE PROTEIN SIAT-RELATED"/>
    <property type="match status" value="1"/>
</dbReference>
<dbReference type="Pfam" id="PF06808">
    <property type="entry name" value="DctM"/>
    <property type="match status" value="1"/>
</dbReference>
<dbReference type="PIRSF" id="PIRSF006066">
    <property type="entry name" value="HI0050"/>
    <property type="match status" value="1"/>
</dbReference>
<keyword id="KW-0997">Cell inner membrane</keyword>
<keyword id="KW-1003">Cell membrane</keyword>
<keyword id="KW-0472">Membrane</keyword>
<keyword id="KW-1185">Reference proteome</keyword>
<keyword id="KW-0812">Transmembrane</keyword>
<keyword id="KW-1133">Transmembrane helix</keyword>
<keyword id="KW-0813">Transport</keyword>
<organism>
    <name type="scientific">Escherichia coli (strain K12)</name>
    <dbReference type="NCBI Taxonomy" id="83333"/>
    <lineage>
        <taxon>Bacteria</taxon>
        <taxon>Pseudomonadati</taxon>
        <taxon>Pseudomonadota</taxon>
        <taxon>Gammaproteobacteria</taxon>
        <taxon>Enterobacterales</taxon>
        <taxon>Enterobacteriaceae</taxon>
        <taxon>Escherichia</taxon>
    </lineage>
</organism>
<sequence>MAVLIFLGCLLGGIAIGLPIAWALLLCGAALMFWLDMFDVQIMAQTLVNGADSFSLLAIPFFVLAGEIMNAGGLSKRIVDLPMKLVGHKPGGLGYVGVLAAMIMASLSGSAVADTAAVAALLVPMMRSANYPVNRAAGLIASGGIIAPIIPPSIPFIIFGVSSGLSISKLFMAGIAPGMMMGATLMLTWWWQASRLNLPRQQKATMQEIWHSFVSGIWALFLPVIIIGGFRSGLFTPTEAGAVAAFYALFVATVIYREMTFATLWHVLIGAAKTTSVVMFLVASAQVSAWLITIAELPMMVSDLLQPLVDSPRLLFIVIMVAILIVGMVMDLTPTVLILTPVLMPLVKEAGIDPIYFGVMFIINCSIGLITPPIGNVLNVISGVAKLKFDDAVRGVFPYVLVLYSLLVVFVFIPDLIILPLKWIN</sequence>
<gene>
    <name type="primary">yiaN</name>
    <name type="ordered locus">b3578</name>
    <name type="ordered locus">JW5651</name>
</gene>
<evidence type="ECO:0000255" key="1"/>
<evidence type="ECO:0000269" key="2">
    <source>
    </source>
</evidence>
<evidence type="ECO:0000305" key="3"/>
<evidence type="ECO:0000305" key="4">
    <source>
    </source>
</evidence>
<reference key="1">
    <citation type="journal article" date="1994" name="Nucleic Acids Res.">
        <title>Analysis of the Escherichia coli genome. V. DNA sequence of the region from 76.0 to 81.5 minutes.</title>
        <authorList>
            <person name="Sofia H.J."/>
            <person name="Burland V."/>
            <person name="Daniels D.L."/>
            <person name="Plunkett G. III"/>
            <person name="Blattner F.R."/>
        </authorList>
    </citation>
    <scope>NUCLEOTIDE SEQUENCE [LARGE SCALE GENOMIC DNA]</scope>
    <source>
        <strain>K12 / MG1655 / ATCC 47076</strain>
    </source>
</reference>
<reference key="2">
    <citation type="journal article" date="1997" name="Science">
        <title>The complete genome sequence of Escherichia coli K-12.</title>
        <authorList>
            <person name="Blattner F.R."/>
            <person name="Plunkett G. III"/>
            <person name="Bloch C.A."/>
            <person name="Perna N.T."/>
            <person name="Burland V."/>
            <person name="Riley M."/>
            <person name="Collado-Vides J."/>
            <person name="Glasner J.D."/>
            <person name="Rode C.K."/>
            <person name="Mayhew G.F."/>
            <person name="Gregor J."/>
            <person name="Davis N.W."/>
            <person name="Kirkpatrick H.A."/>
            <person name="Goeden M.A."/>
            <person name="Rose D.J."/>
            <person name="Mau B."/>
            <person name="Shao Y."/>
        </authorList>
    </citation>
    <scope>NUCLEOTIDE SEQUENCE [LARGE SCALE GENOMIC DNA]</scope>
    <source>
        <strain>K12 / MG1655 / ATCC 47076</strain>
    </source>
</reference>
<reference key="3">
    <citation type="journal article" date="2006" name="Nucleic Acids Res.">
        <title>Escherichia coli K-12: a cooperatively developed annotation snapshot -- 2005.</title>
        <authorList>
            <person name="Riley M."/>
            <person name="Abe T."/>
            <person name="Arnaud M.B."/>
            <person name="Berlyn M.K.B."/>
            <person name="Blattner F.R."/>
            <person name="Chaudhuri R.R."/>
            <person name="Glasner J.D."/>
            <person name="Horiuchi T."/>
            <person name="Keseler I.M."/>
            <person name="Kosuge T."/>
            <person name="Mori H."/>
            <person name="Perna N.T."/>
            <person name="Plunkett G. III"/>
            <person name="Rudd K.E."/>
            <person name="Serres M.H."/>
            <person name="Thomas G.H."/>
            <person name="Thomson N.R."/>
            <person name="Wishart D."/>
            <person name="Wanner B.L."/>
        </authorList>
    </citation>
    <scope>SEQUENCE REVISION</scope>
</reference>
<reference key="4">
    <citation type="journal article" date="2006" name="Mol. Syst. Biol.">
        <title>Highly accurate genome sequences of Escherichia coli K-12 strains MG1655 and W3110.</title>
        <authorList>
            <person name="Hayashi K."/>
            <person name="Morooka N."/>
            <person name="Yamamoto Y."/>
            <person name="Fujita K."/>
            <person name="Isono K."/>
            <person name="Choi S."/>
            <person name="Ohtsubo E."/>
            <person name="Baba T."/>
            <person name="Wanner B.L."/>
            <person name="Mori H."/>
            <person name="Horiuchi T."/>
        </authorList>
    </citation>
    <scope>NUCLEOTIDE SEQUENCE [LARGE SCALE GENOMIC DNA]</scope>
    <source>
        <strain>K12 / W3110 / ATCC 27325 / DSM 5911</strain>
    </source>
</reference>
<reference key="5">
    <citation type="journal article" date="2004" name="Mol. Membr. Biol.">
        <title>Functional characterization of the Escherichia coli K-12 yiaMNO transport protein genes.</title>
        <authorList>
            <person name="Plantinga T.H."/>
            <person name="van der Does C."/>
            <person name="Badia J."/>
            <person name="Aguilar J."/>
            <person name="Konings W.N."/>
            <person name="Driessen A.J.M."/>
        </authorList>
    </citation>
    <scope>PRELIMINARY FUNCTION</scope>
    <source>
        <strain>K12</strain>
    </source>
</reference>
<reference key="6">
    <citation type="journal article" date="2005" name="Microbiology">
        <title>Deletion of the yiaMNO transporter genes affects the growth characteristics of Escherichia coli K-12.</title>
        <authorList>
            <person name="Plantinga T.H."/>
            <person name="van der Does C."/>
            <person name="Tomkiewicz D."/>
            <person name="van Keulen G."/>
            <person name="Konings W.N."/>
            <person name="Driessen A.J.M."/>
        </authorList>
    </citation>
    <scope>DELETION STUDIES</scope>
    <source>
        <strain>K12</strain>
    </source>
</reference>
<reference key="7">
    <citation type="journal article" date="2006" name="Microbiology">
        <title>Novel ligands for the extracellular solute receptors of two bacterial TRAP transporters.</title>
        <authorList>
            <person name="Thomas G.H."/>
            <person name="Southworth T."/>
            <person name="Leon-Kempis M.R."/>
            <person name="Leech A."/>
            <person name="Kelly D.J."/>
        </authorList>
    </citation>
    <scope>FUNCTION</scope>
    <source>
        <strain>K12 / W3110 / ATCC 27325 / DSM 5911</strain>
    </source>
</reference>
<feature type="chain" id="PRO_0000169598" description="2,3-diketo-L-gulonate TRAP transporter large permease protein YiaN">
    <location>
        <begin position="1"/>
        <end position="425"/>
    </location>
</feature>
<feature type="transmembrane region" description="Helical" evidence="1">
    <location>
        <begin position="3"/>
        <end position="23"/>
    </location>
</feature>
<feature type="transmembrane region" description="Helical" evidence="1">
    <location>
        <begin position="54"/>
        <end position="74"/>
    </location>
</feature>
<feature type="transmembrane region" description="Helical" evidence="1">
    <location>
        <begin position="93"/>
        <end position="113"/>
    </location>
</feature>
<feature type="transmembrane region" description="Helical" evidence="1">
    <location>
        <begin position="139"/>
        <end position="159"/>
    </location>
</feature>
<feature type="transmembrane region" description="Helical" evidence="1">
    <location>
        <begin position="170"/>
        <end position="190"/>
    </location>
</feature>
<feature type="transmembrane region" description="Helical" evidence="1">
    <location>
        <begin position="209"/>
        <end position="229"/>
    </location>
</feature>
<feature type="transmembrane region" description="Helical" evidence="1">
    <location>
        <begin position="235"/>
        <end position="255"/>
    </location>
</feature>
<feature type="transmembrane region" description="Helical" evidence="1">
    <location>
        <begin position="277"/>
        <end position="297"/>
    </location>
</feature>
<feature type="transmembrane region" description="Helical" evidence="1">
    <location>
        <begin position="314"/>
        <end position="334"/>
    </location>
</feature>
<feature type="transmembrane region" description="Helical" evidence="1">
    <location>
        <begin position="355"/>
        <end position="375"/>
    </location>
</feature>
<feature type="transmembrane region" description="Helical" evidence="1">
    <location>
        <begin position="399"/>
        <end position="419"/>
    </location>
</feature>
<comment type="function">
    <text evidence="2">Part of the tripartite ATP-independent periplasmic (TRAP) transport system YiaMNO involved in the uptake of 2,3-diketo-L-gulonate.</text>
</comment>
<comment type="subunit">
    <text>The complex comprises the extracytoplasmic solute receptor protein YiaO, and the two transmembrane proteins YiaM and YiaN.</text>
</comment>
<comment type="subcellular location">
    <subcellularLocation>
        <location evidence="3">Cell inner membrane</location>
        <topology evidence="3">Multi-pass membrane protein</topology>
    </subcellularLocation>
</comment>
<comment type="similarity">
    <text evidence="3">Belongs to the TRAP transporter large permease family.</text>
</comment>
<comment type="caution">
    <text evidence="4">Was originally proposed to be a subunit from an L-xylulose uptake system, but PubMed:16385129 shows that it does not bind L- or D-xylulose.</text>
</comment>
<comment type="sequence caution" evidence="3">
    <conflict type="frameshift">
        <sequence resource="EMBL-CDS" id="AAB18555"/>
    </conflict>
</comment>
<proteinExistence type="inferred from homology"/>
<protein>
    <recommendedName>
        <fullName>2,3-diketo-L-gulonate TRAP transporter large permease protein YiaN</fullName>
    </recommendedName>
</protein>
<accession>P37675</accession>
<accession>Q2M7P1</accession>
<accession>Q6BF20</accession>